<dbReference type="EC" id="4.2.1.20" evidence="1"/>
<dbReference type="EMBL" id="CP000437">
    <property type="protein sequence ID" value="ABI82138.1"/>
    <property type="molecule type" value="Genomic_DNA"/>
</dbReference>
<dbReference type="RefSeq" id="WP_003014080.1">
    <property type="nucleotide sequence ID" value="NC_017463.1"/>
</dbReference>
<dbReference type="SMR" id="Q0BP46"/>
<dbReference type="KEGG" id="fth:FTH_0092"/>
<dbReference type="UniPathway" id="UPA00035">
    <property type="reaction ID" value="UER00044"/>
</dbReference>
<dbReference type="GO" id="GO:0005829">
    <property type="term" value="C:cytosol"/>
    <property type="evidence" value="ECO:0007669"/>
    <property type="project" value="TreeGrafter"/>
</dbReference>
<dbReference type="GO" id="GO:0004834">
    <property type="term" value="F:tryptophan synthase activity"/>
    <property type="evidence" value="ECO:0007669"/>
    <property type="project" value="UniProtKB-UniRule"/>
</dbReference>
<dbReference type="CDD" id="cd04724">
    <property type="entry name" value="Tryptophan_synthase_alpha"/>
    <property type="match status" value="1"/>
</dbReference>
<dbReference type="FunFam" id="3.20.20.70:FF:000037">
    <property type="entry name" value="Tryptophan synthase alpha chain"/>
    <property type="match status" value="1"/>
</dbReference>
<dbReference type="Gene3D" id="3.20.20.70">
    <property type="entry name" value="Aldolase class I"/>
    <property type="match status" value="1"/>
</dbReference>
<dbReference type="HAMAP" id="MF_00131">
    <property type="entry name" value="Trp_synth_alpha"/>
    <property type="match status" value="1"/>
</dbReference>
<dbReference type="InterPro" id="IPR013785">
    <property type="entry name" value="Aldolase_TIM"/>
</dbReference>
<dbReference type="InterPro" id="IPR011060">
    <property type="entry name" value="RibuloseP-bd_barrel"/>
</dbReference>
<dbReference type="InterPro" id="IPR002028">
    <property type="entry name" value="Trp_synthase_suA"/>
</dbReference>
<dbReference type="NCBIfam" id="TIGR00262">
    <property type="entry name" value="trpA"/>
    <property type="match status" value="1"/>
</dbReference>
<dbReference type="PANTHER" id="PTHR43406:SF1">
    <property type="entry name" value="TRYPTOPHAN SYNTHASE ALPHA CHAIN, CHLOROPLASTIC"/>
    <property type="match status" value="1"/>
</dbReference>
<dbReference type="PANTHER" id="PTHR43406">
    <property type="entry name" value="TRYPTOPHAN SYNTHASE, ALPHA CHAIN"/>
    <property type="match status" value="1"/>
</dbReference>
<dbReference type="Pfam" id="PF00290">
    <property type="entry name" value="Trp_syntA"/>
    <property type="match status" value="1"/>
</dbReference>
<dbReference type="SUPFAM" id="SSF51366">
    <property type="entry name" value="Ribulose-phoshate binding barrel"/>
    <property type="match status" value="1"/>
</dbReference>
<sequence length="269" mass="29077">MTNRYTTLFANLEKRNEGAFIPFVTIGDPNKALSFEIIDTLVSSGADALELGIPFSDHLADGPTIQEANIRALESGITPKDCFDILTKIRAKYPHIPIGLLLYANLVYANGIENFYQKCLDAGVDSILIADVPAHESKEFRDIAKKVGIAQIFIAPPDASESTLKQISKLGSGYTYLLSRVGVTGTETAANMPVEDVLAKLREYNAPKPVLGFGISKPEQVQQAIKAGAAGAISGSATVKIIQNNISNKQKMLNELTYFVKEMKAATLN</sequence>
<gene>
    <name evidence="1" type="primary">trpA</name>
    <name type="ordered locus">FTH_0092</name>
</gene>
<reference key="1">
    <citation type="journal article" date="2006" name="J. Bacteriol.">
        <title>Chromosome rearrangement and diversification of Francisella tularensis revealed by the type B (OSU18) genome sequence.</title>
        <authorList>
            <person name="Petrosino J.F."/>
            <person name="Xiang Q."/>
            <person name="Karpathy S.E."/>
            <person name="Jiang H."/>
            <person name="Yerrapragada S."/>
            <person name="Liu Y."/>
            <person name="Gioia J."/>
            <person name="Hemphill L."/>
            <person name="Gonzalez A."/>
            <person name="Raghavan T.M."/>
            <person name="Uzman A."/>
            <person name="Fox G.E."/>
            <person name="Highlander S."/>
            <person name="Reichard M."/>
            <person name="Morton R.J."/>
            <person name="Clinkenbeard K.D."/>
            <person name="Weinstock G.M."/>
        </authorList>
    </citation>
    <scope>NUCLEOTIDE SEQUENCE [LARGE SCALE GENOMIC DNA]</scope>
    <source>
        <strain>OSU18</strain>
    </source>
</reference>
<protein>
    <recommendedName>
        <fullName evidence="1">Tryptophan synthase alpha chain</fullName>
        <ecNumber evidence="1">4.2.1.20</ecNumber>
    </recommendedName>
</protein>
<proteinExistence type="inferred from homology"/>
<name>TRPA_FRATO</name>
<accession>Q0BP46</accession>
<feature type="chain" id="PRO_1000018205" description="Tryptophan synthase alpha chain">
    <location>
        <begin position="1"/>
        <end position="269"/>
    </location>
</feature>
<feature type="active site" description="Proton acceptor" evidence="1">
    <location>
        <position position="50"/>
    </location>
</feature>
<feature type="active site" description="Proton acceptor" evidence="1">
    <location>
        <position position="61"/>
    </location>
</feature>
<keyword id="KW-0028">Amino-acid biosynthesis</keyword>
<keyword id="KW-0057">Aromatic amino acid biosynthesis</keyword>
<keyword id="KW-0456">Lyase</keyword>
<keyword id="KW-0822">Tryptophan biosynthesis</keyword>
<evidence type="ECO:0000255" key="1">
    <source>
        <dbReference type="HAMAP-Rule" id="MF_00131"/>
    </source>
</evidence>
<organism>
    <name type="scientific">Francisella tularensis subsp. holarctica (strain OSU18)</name>
    <dbReference type="NCBI Taxonomy" id="393011"/>
    <lineage>
        <taxon>Bacteria</taxon>
        <taxon>Pseudomonadati</taxon>
        <taxon>Pseudomonadota</taxon>
        <taxon>Gammaproteobacteria</taxon>
        <taxon>Thiotrichales</taxon>
        <taxon>Francisellaceae</taxon>
        <taxon>Francisella</taxon>
    </lineage>
</organism>
<comment type="function">
    <text evidence="1">The alpha subunit is responsible for the aldol cleavage of indoleglycerol phosphate to indole and glyceraldehyde 3-phosphate.</text>
</comment>
<comment type="catalytic activity">
    <reaction evidence="1">
        <text>(1S,2R)-1-C-(indol-3-yl)glycerol 3-phosphate + L-serine = D-glyceraldehyde 3-phosphate + L-tryptophan + H2O</text>
        <dbReference type="Rhea" id="RHEA:10532"/>
        <dbReference type="ChEBI" id="CHEBI:15377"/>
        <dbReference type="ChEBI" id="CHEBI:33384"/>
        <dbReference type="ChEBI" id="CHEBI:57912"/>
        <dbReference type="ChEBI" id="CHEBI:58866"/>
        <dbReference type="ChEBI" id="CHEBI:59776"/>
        <dbReference type="EC" id="4.2.1.20"/>
    </reaction>
</comment>
<comment type="pathway">
    <text evidence="1">Amino-acid biosynthesis; L-tryptophan biosynthesis; L-tryptophan from chorismate: step 5/5.</text>
</comment>
<comment type="subunit">
    <text evidence="1">Tetramer of two alpha and two beta chains.</text>
</comment>
<comment type="similarity">
    <text evidence="1">Belongs to the TrpA family.</text>
</comment>